<protein>
    <recommendedName>
        <fullName evidence="1">2-isopropylmalate synthase</fullName>
        <ecNumber evidence="1">2.3.3.13</ecNumber>
    </recommendedName>
    <alternativeName>
        <fullName evidence="1">Alpha-IPM synthase</fullName>
    </alternativeName>
    <alternativeName>
        <fullName evidence="1">Alpha-isopropylmalate synthase</fullName>
    </alternativeName>
</protein>
<proteinExistence type="inferred from homology"/>
<feature type="chain" id="PRO_0000140371" description="2-isopropylmalate synthase">
    <location>
        <begin position="1"/>
        <end position="546"/>
    </location>
</feature>
<feature type="domain" description="Pyruvate carboxyltransferase" evidence="1">
    <location>
        <begin position="8"/>
        <end position="271"/>
    </location>
</feature>
<feature type="region of interest" description="Regulatory domain" evidence="1">
    <location>
        <begin position="408"/>
        <end position="546"/>
    </location>
</feature>
<feature type="binding site" evidence="1">
    <location>
        <position position="17"/>
    </location>
    <ligand>
        <name>Mn(2+)</name>
        <dbReference type="ChEBI" id="CHEBI:29035"/>
    </ligand>
</feature>
<feature type="binding site" evidence="1">
    <location>
        <position position="208"/>
    </location>
    <ligand>
        <name>Mn(2+)</name>
        <dbReference type="ChEBI" id="CHEBI:29035"/>
    </ligand>
</feature>
<feature type="binding site" evidence="1">
    <location>
        <position position="210"/>
    </location>
    <ligand>
        <name>Mn(2+)</name>
        <dbReference type="ChEBI" id="CHEBI:29035"/>
    </ligand>
</feature>
<feature type="binding site" evidence="1">
    <location>
        <position position="244"/>
    </location>
    <ligand>
        <name>Mn(2+)</name>
        <dbReference type="ChEBI" id="CHEBI:29035"/>
    </ligand>
</feature>
<accession>Q7V121</accession>
<dbReference type="EC" id="2.3.3.13" evidence="1"/>
<dbReference type="EMBL" id="BX548174">
    <property type="protein sequence ID" value="CAE19525.1"/>
    <property type="molecule type" value="Genomic_DNA"/>
</dbReference>
<dbReference type="RefSeq" id="WP_011132699.1">
    <property type="nucleotide sequence ID" value="NC_005072.1"/>
</dbReference>
<dbReference type="SMR" id="Q7V121"/>
<dbReference type="STRING" id="59919.PMM1066"/>
<dbReference type="KEGG" id="pmm:PMM1066"/>
<dbReference type="eggNOG" id="COG0119">
    <property type="taxonomic scope" value="Bacteria"/>
</dbReference>
<dbReference type="HOGENOM" id="CLU_022158_0_1_3"/>
<dbReference type="OrthoDB" id="9804858at2"/>
<dbReference type="UniPathway" id="UPA00048">
    <property type="reaction ID" value="UER00070"/>
</dbReference>
<dbReference type="Proteomes" id="UP000001026">
    <property type="component" value="Chromosome"/>
</dbReference>
<dbReference type="GO" id="GO:0005737">
    <property type="term" value="C:cytoplasm"/>
    <property type="evidence" value="ECO:0007669"/>
    <property type="project" value="UniProtKB-SubCell"/>
</dbReference>
<dbReference type="GO" id="GO:0003852">
    <property type="term" value="F:2-isopropylmalate synthase activity"/>
    <property type="evidence" value="ECO:0007669"/>
    <property type="project" value="UniProtKB-UniRule"/>
</dbReference>
<dbReference type="GO" id="GO:0003985">
    <property type="term" value="F:acetyl-CoA C-acetyltransferase activity"/>
    <property type="evidence" value="ECO:0007669"/>
    <property type="project" value="UniProtKB-UniRule"/>
</dbReference>
<dbReference type="GO" id="GO:0030145">
    <property type="term" value="F:manganese ion binding"/>
    <property type="evidence" value="ECO:0007669"/>
    <property type="project" value="UniProtKB-UniRule"/>
</dbReference>
<dbReference type="GO" id="GO:0009098">
    <property type="term" value="P:L-leucine biosynthetic process"/>
    <property type="evidence" value="ECO:0007669"/>
    <property type="project" value="UniProtKB-UniRule"/>
</dbReference>
<dbReference type="CDD" id="cd07940">
    <property type="entry name" value="DRE_TIM_IPMS"/>
    <property type="match status" value="1"/>
</dbReference>
<dbReference type="FunFam" id="1.10.238.260:FF:000001">
    <property type="entry name" value="2-isopropylmalate synthase"/>
    <property type="match status" value="1"/>
</dbReference>
<dbReference type="FunFam" id="3.20.20.70:FF:000010">
    <property type="entry name" value="2-isopropylmalate synthase"/>
    <property type="match status" value="1"/>
</dbReference>
<dbReference type="Gene3D" id="1.10.238.260">
    <property type="match status" value="1"/>
</dbReference>
<dbReference type="Gene3D" id="3.30.160.270">
    <property type="match status" value="1"/>
</dbReference>
<dbReference type="Gene3D" id="3.20.20.70">
    <property type="entry name" value="Aldolase class I"/>
    <property type="match status" value="1"/>
</dbReference>
<dbReference type="HAMAP" id="MF_01025">
    <property type="entry name" value="LeuA_type1"/>
    <property type="match status" value="1"/>
</dbReference>
<dbReference type="InterPro" id="IPR050073">
    <property type="entry name" value="2-IPM_HCS-like"/>
</dbReference>
<dbReference type="InterPro" id="IPR013709">
    <property type="entry name" value="2-isopropylmalate_synth_dimer"/>
</dbReference>
<dbReference type="InterPro" id="IPR002034">
    <property type="entry name" value="AIPM/Hcit_synth_CS"/>
</dbReference>
<dbReference type="InterPro" id="IPR013785">
    <property type="entry name" value="Aldolase_TIM"/>
</dbReference>
<dbReference type="InterPro" id="IPR054691">
    <property type="entry name" value="LeuA/HCS_post-cat"/>
</dbReference>
<dbReference type="InterPro" id="IPR036230">
    <property type="entry name" value="LeuA_allosteric_dom_sf"/>
</dbReference>
<dbReference type="InterPro" id="IPR005671">
    <property type="entry name" value="LeuA_bact_synth"/>
</dbReference>
<dbReference type="InterPro" id="IPR000891">
    <property type="entry name" value="PYR_CT"/>
</dbReference>
<dbReference type="NCBIfam" id="TIGR00973">
    <property type="entry name" value="leuA_bact"/>
    <property type="match status" value="1"/>
</dbReference>
<dbReference type="NCBIfam" id="NF002086">
    <property type="entry name" value="PRK00915.1-3"/>
    <property type="match status" value="1"/>
</dbReference>
<dbReference type="PANTHER" id="PTHR10277:SF9">
    <property type="entry name" value="2-ISOPROPYLMALATE SYNTHASE 1, CHLOROPLASTIC-RELATED"/>
    <property type="match status" value="1"/>
</dbReference>
<dbReference type="PANTHER" id="PTHR10277">
    <property type="entry name" value="HOMOCITRATE SYNTHASE-RELATED"/>
    <property type="match status" value="1"/>
</dbReference>
<dbReference type="Pfam" id="PF22617">
    <property type="entry name" value="HCS_D2"/>
    <property type="match status" value="1"/>
</dbReference>
<dbReference type="Pfam" id="PF00682">
    <property type="entry name" value="HMGL-like"/>
    <property type="match status" value="1"/>
</dbReference>
<dbReference type="Pfam" id="PF08502">
    <property type="entry name" value="LeuA_dimer"/>
    <property type="match status" value="1"/>
</dbReference>
<dbReference type="SMART" id="SM00917">
    <property type="entry name" value="LeuA_dimer"/>
    <property type="match status" value="1"/>
</dbReference>
<dbReference type="SUPFAM" id="SSF110921">
    <property type="entry name" value="2-isopropylmalate synthase LeuA, allosteric (dimerisation) domain"/>
    <property type="match status" value="1"/>
</dbReference>
<dbReference type="SUPFAM" id="SSF51569">
    <property type="entry name" value="Aldolase"/>
    <property type="match status" value="1"/>
</dbReference>
<dbReference type="PROSITE" id="PS00815">
    <property type="entry name" value="AIPM_HOMOCIT_SYNTH_1"/>
    <property type="match status" value="1"/>
</dbReference>
<dbReference type="PROSITE" id="PS00816">
    <property type="entry name" value="AIPM_HOMOCIT_SYNTH_2"/>
    <property type="match status" value="1"/>
</dbReference>
<dbReference type="PROSITE" id="PS50991">
    <property type="entry name" value="PYR_CT"/>
    <property type="match status" value="1"/>
</dbReference>
<sequence>MSKDPGRILIFDTTLRDGEQSPGASLNLEEKLAIAHQLARLGVDVIEAGFPFASPGDFKAVNKIAEVVGGENGPIICGLARASTNDIKACYEAISPAPKKRIHTFIATSDIHLKHKLRKTRSDVLCIVPEMVSYAKSLVDDIEFSCEDASRSDPEFLYEVIQLAITSGATTINIPDTVGFTTPSEFGKLIFDINKNVPNIDEAIISVHGHNDLGLAVANFLEAAKNGARQLECTINGIGERAGNASLEELVMALHVRKSFFNSFFGRSSDSPTPLTAIRTEEITKTSRLVSNLTGMNVQPNKAIVGANAFAHESGIHQDGVLKNRLTYEIIDAKTVGLNDNKISLGKLSGRSAVRARLEEMGYDLSREDLNDAFARFKELADRKREITDRDLEAIVSEQVQLPESKFQLSHVQVSCGSTSKPTATVTLINTEDHTEDTAVAIGTGPVDAVCEALNALTKVPNELIEFSVKSVTEGIDALGEVTIRIRNKNKIYSGHSADTDVVVAAANAFVNALNRLVFSEKKNSIHPQFDDLENPKNKVLSNPKK</sequence>
<evidence type="ECO:0000255" key="1">
    <source>
        <dbReference type="HAMAP-Rule" id="MF_01025"/>
    </source>
</evidence>
<gene>
    <name evidence="1" type="primary">leuA</name>
    <name type="ordered locus">PMM1066</name>
</gene>
<comment type="function">
    <text evidence="1">Catalyzes the condensation of the acetyl group of acetyl-CoA with 3-methyl-2-oxobutanoate (2-ketoisovalerate) to form 3-carboxy-3-hydroxy-4-methylpentanoate (2-isopropylmalate).</text>
</comment>
<comment type="catalytic activity">
    <reaction evidence="1">
        <text>3-methyl-2-oxobutanoate + acetyl-CoA + H2O = (2S)-2-isopropylmalate + CoA + H(+)</text>
        <dbReference type="Rhea" id="RHEA:21524"/>
        <dbReference type="ChEBI" id="CHEBI:1178"/>
        <dbReference type="ChEBI" id="CHEBI:11851"/>
        <dbReference type="ChEBI" id="CHEBI:15377"/>
        <dbReference type="ChEBI" id="CHEBI:15378"/>
        <dbReference type="ChEBI" id="CHEBI:57287"/>
        <dbReference type="ChEBI" id="CHEBI:57288"/>
        <dbReference type="EC" id="2.3.3.13"/>
    </reaction>
</comment>
<comment type="cofactor">
    <cofactor evidence="1">
        <name>Mn(2+)</name>
        <dbReference type="ChEBI" id="CHEBI:29035"/>
    </cofactor>
</comment>
<comment type="pathway">
    <text evidence="1">Amino-acid biosynthesis; L-leucine biosynthesis; L-leucine from 3-methyl-2-oxobutanoate: step 1/4.</text>
</comment>
<comment type="subunit">
    <text evidence="1">Homodimer.</text>
</comment>
<comment type="subcellular location">
    <subcellularLocation>
        <location evidence="1">Cytoplasm</location>
    </subcellularLocation>
</comment>
<comment type="similarity">
    <text evidence="1">Belongs to the alpha-IPM synthase/homocitrate synthase family. LeuA type 1 subfamily.</text>
</comment>
<organism>
    <name type="scientific">Prochlorococcus marinus subsp. pastoris (strain CCMP1986 / NIES-2087 / MED4)</name>
    <dbReference type="NCBI Taxonomy" id="59919"/>
    <lineage>
        <taxon>Bacteria</taxon>
        <taxon>Bacillati</taxon>
        <taxon>Cyanobacteriota</taxon>
        <taxon>Cyanophyceae</taxon>
        <taxon>Synechococcales</taxon>
        <taxon>Prochlorococcaceae</taxon>
        <taxon>Prochlorococcus</taxon>
    </lineage>
</organism>
<reference key="1">
    <citation type="journal article" date="2003" name="Nature">
        <title>Genome divergence in two Prochlorococcus ecotypes reflects oceanic niche differentiation.</title>
        <authorList>
            <person name="Rocap G."/>
            <person name="Larimer F.W."/>
            <person name="Lamerdin J.E."/>
            <person name="Malfatti S."/>
            <person name="Chain P."/>
            <person name="Ahlgren N.A."/>
            <person name="Arellano A."/>
            <person name="Coleman M."/>
            <person name="Hauser L."/>
            <person name="Hess W.R."/>
            <person name="Johnson Z.I."/>
            <person name="Land M.L."/>
            <person name="Lindell D."/>
            <person name="Post A.F."/>
            <person name="Regala W."/>
            <person name="Shah M."/>
            <person name="Shaw S.L."/>
            <person name="Steglich C."/>
            <person name="Sullivan M.B."/>
            <person name="Ting C.S."/>
            <person name="Tolonen A."/>
            <person name="Webb E.A."/>
            <person name="Zinser E.R."/>
            <person name="Chisholm S.W."/>
        </authorList>
    </citation>
    <scope>NUCLEOTIDE SEQUENCE [LARGE SCALE GENOMIC DNA]</scope>
    <source>
        <strain>CCMP1986 / NIES-2087 / MED4</strain>
    </source>
</reference>
<name>LEU1_PROMP</name>
<keyword id="KW-0028">Amino-acid biosynthesis</keyword>
<keyword id="KW-0100">Branched-chain amino acid biosynthesis</keyword>
<keyword id="KW-0963">Cytoplasm</keyword>
<keyword id="KW-0432">Leucine biosynthesis</keyword>
<keyword id="KW-0464">Manganese</keyword>
<keyword id="KW-0479">Metal-binding</keyword>
<keyword id="KW-0808">Transferase</keyword>